<evidence type="ECO:0000250" key="1">
    <source>
        <dbReference type="UniProtKB" id="A0A0B0QJN8"/>
    </source>
</evidence>
<evidence type="ECO:0000250" key="2">
    <source>
        <dbReference type="UniProtKB" id="Q8ECH7"/>
    </source>
</evidence>
<evidence type="ECO:0000305" key="3"/>
<organism>
    <name type="scientific">Methanocaldococcus jannaschii (strain ATCC 43067 / DSM 2661 / JAL-1 / JCM 10045 / NBRC 100440)</name>
    <name type="common">Methanococcus jannaschii</name>
    <dbReference type="NCBI Taxonomy" id="243232"/>
    <lineage>
        <taxon>Archaea</taxon>
        <taxon>Methanobacteriati</taxon>
        <taxon>Methanobacteriota</taxon>
        <taxon>Methanomada group</taxon>
        <taxon>Methanococci</taxon>
        <taxon>Methanococcales</taxon>
        <taxon>Methanocaldococcaceae</taxon>
        <taxon>Methanocaldococcus</taxon>
    </lineage>
</organism>
<gene>
    <name type="ordered locus">MJ1305</name>
</gene>
<feature type="chain" id="PRO_0000107263" description="Putative protein adenylyltransferase MJ1305">
    <location>
        <begin position="1"/>
        <end position="147"/>
    </location>
</feature>
<feature type="short sequence motif" description="GSX(10)DXD motif" evidence="2">
    <location>
        <begin position="32"/>
        <end position="46"/>
    </location>
</feature>
<feature type="binding site" evidence="2">
    <location>
        <position position="44"/>
    </location>
    <ligand>
        <name>Mg(2+)</name>
        <dbReference type="ChEBI" id="CHEBI:18420"/>
        <label>1</label>
    </ligand>
</feature>
<feature type="binding site" evidence="2">
    <location>
        <position position="44"/>
    </location>
    <ligand>
        <name>Mg(2+)</name>
        <dbReference type="ChEBI" id="CHEBI:18420"/>
        <label>2</label>
    </ligand>
</feature>
<feature type="binding site" evidence="2">
    <location>
        <position position="46"/>
    </location>
    <ligand>
        <name>Mg(2+)</name>
        <dbReference type="ChEBI" id="CHEBI:18420"/>
        <label>1</label>
    </ligand>
</feature>
<feature type="binding site" evidence="2">
    <location>
        <position position="46"/>
    </location>
    <ligand>
        <name>Mg(2+)</name>
        <dbReference type="ChEBI" id="CHEBI:18420"/>
        <label>2</label>
    </ligand>
</feature>
<sequence>MDEKMLNNILDEFLQKCKQKFGDDLISIILFGSYARGTAVEYSDVDLLVIAKNLPKRRIDRHKVLRDIVLEFIYRYGINISPILVEPRDLSLKSINPLICGILTGYKIIYDRDNFWKNYLERIKPIIKRIKPIFIDEEKEWKIADLI</sequence>
<protein>
    <recommendedName>
        <fullName>Putative protein adenylyltransferase MJ1305</fullName>
        <ecNumber evidence="1">2.7.7.108</ecNumber>
    </recommendedName>
    <alternativeName>
        <fullName>Putative antitoxin MJ1305</fullName>
    </alternativeName>
</protein>
<name>Y1305_METJA</name>
<accession>Q58701</accession>
<reference key="1">
    <citation type="journal article" date="1996" name="Science">
        <title>Complete genome sequence of the methanogenic archaeon, Methanococcus jannaschii.</title>
        <authorList>
            <person name="Bult C.J."/>
            <person name="White O."/>
            <person name="Olsen G.J."/>
            <person name="Zhou L."/>
            <person name="Fleischmann R.D."/>
            <person name="Sutton G.G."/>
            <person name="Blake J.A."/>
            <person name="FitzGerald L.M."/>
            <person name="Clayton R.A."/>
            <person name="Gocayne J.D."/>
            <person name="Kerlavage A.R."/>
            <person name="Dougherty B.A."/>
            <person name="Tomb J.-F."/>
            <person name="Adams M.D."/>
            <person name="Reich C.I."/>
            <person name="Overbeek R."/>
            <person name="Kirkness E.F."/>
            <person name="Weinstock K.G."/>
            <person name="Merrick J.M."/>
            <person name="Glodek A."/>
            <person name="Scott J.L."/>
            <person name="Geoghagen N.S.M."/>
            <person name="Weidman J.F."/>
            <person name="Fuhrmann J.L."/>
            <person name="Nguyen D."/>
            <person name="Utterback T.R."/>
            <person name="Kelley J.M."/>
            <person name="Peterson J.D."/>
            <person name="Sadow P.W."/>
            <person name="Hanna M.C."/>
            <person name="Cotton M.D."/>
            <person name="Roberts K.M."/>
            <person name="Hurst M.A."/>
            <person name="Kaine B.P."/>
            <person name="Borodovsky M."/>
            <person name="Klenk H.-P."/>
            <person name="Fraser C.M."/>
            <person name="Smith H.O."/>
            <person name="Woese C.R."/>
            <person name="Venter J.C."/>
        </authorList>
    </citation>
    <scope>NUCLEOTIDE SEQUENCE [LARGE SCALE GENOMIC DNA]</scope>
    <source>
        <strain>ATCC 43067 / DSM 2661 / JAL-1 / JCM 10045 / NBRC 100440</strain>
    </source>
</reference>
<proteinExistence type="inferred from homology"/>
<comment type="function">
    <text evidence="2">Putative antitoxin component of a putative type VII toxin-antitoxin (TA) system. Its cognate toxin might be MJ1304, which it might AMPylate.</text>
</comment>
<comment type="catalytic activity">
    <reaction evidence="2">
        <text>L-tyrosyl-[protein] + ATP = O-(5'-adenylyl)-L-tyrosyl-[protein] + diphosphate</text>
        <dbReference type="Rhea" id="RHEA:54288"/>
        <dbReference type="Rhea" id="RHEA-COMP:10136"/>
        <dbReference type="Rhea" id="RHEA-COMP:13846"/>
        <dbReference type="ChEBI" id="CHEBI:30616"/>
        <dbReference type="ChEBI" id="CHEBI:33019"/>
        <dbReference type="ChEBI" id="CHEBI:46858"/>
        <dbReference type="ChEBI" id="CHEBI:83624"/>
        <dbReference type="EC" id="2.7.7.108"/>
    </reaction>
</comment>
<comment type="catalytic activity">
    <reaction evidence="2">
        <text>O-(5'-adenylyl)-L-tyrosyl-[protein] + ATP = O-[5'-(adenylyl-(5'-&gt;3')-adenylyl)]-L-tyrosyl-[protein] + diphosphate</text>
        <dbReference type="Rhea" id="RHEA:66528"/>
        <dbReference type="Rhea" id="RHEA-COMP:13846"/>
        <dbReference type="Rhea" id="RHEA-COMP:17046"/>
        <dbReference type="ChEBI" id="CHEBI:30616"/>
        <dbReference type="ChEBI" id="CHEBI:33019"/>
        <dbReference type="ChEBI" id="CHEBI:83624"/>
        <dbReference type="ChEBI" id="CHEBI:167160"/>
    </reaction>
</comment>
<comment type="cofactor">
    <cofactor evidence="2">
        <name>Mg(2+)</name>
        <dbReference type="ChEBI" id="CHEBI:18420"/>
    </cofactor>
    <text evidence="2">Binds 2 Mg(2+) ions.</text>
</comment>
<comment type="similarity">
    <text evidence="3">Belongs to the MntA antitoxin family.</text>
</comment>
<keyword id="KW-0067">ATP-binding</keyword>
<keyword id="KW-0460">Magnesium</keyword>
<keyword id="KW-0479">Metal-binding</keyword>
<keyword id="KW-0547">Nucleotide-binding</keyword>
<keyword id="KW-0548">Nucleotidyltransferase</keyword>
<keyword id="KW-1185">Reference proteome</keyword>
<keyword id="KW-1277">Toxin-antitoxin system</keyword>
<keyword id="KW-0808">Transferase</keyword>
<dbReference type="EC" id="2.7.7.108" evidence="1"/>
<dbReference type="EMBL" id="L77117">
    <property type="protein sequence ID" value="AAB99327.1"/>
    <property type="molecule type" value="Genomic_DNA"/>
</dbReference>
<dbReference type="PIR" id="H64462">
    <property type="entry name" value="H64462"/>
</dbReference>
<dbReference type="RefSeq" id="WP_010870822.1">
    <property type="nucleotide sequence ID" value="NC_000909.1"/>
</dbReference>
<dbReference type="SMR" id="Q58701"/>
<dbReference type="STRING" id="243232.MJ_1305"/>
<dbReference type="PaxDb" id="243232-MJ_1305"/>
<dbReference type="EnsemblBacteria" id="AAB99327">
    <property type="protein sequence ID" value="AAB99327"/>
    <property type="gene ID" value="MJ_1305"/>
</dbReference>
<dbReference type="GeneID" id="1452207"/>
<dbReference type="KEGG" id="mja:MJ_1305"/>
<dbReference type="eggNOG" id="arCOG01202">
    <property type="taxonomic scope" value="Archaea"/>
</dbReference>
<dbReference type="HOGENOM" id="CLU_131320_1_0_2"/>
<dbReference type="InParanoid" id="Q58701"/>
<dbReference type="OrthoDB" id="9287at2157"/>
<dbReference type="PhylomeDB" id="Q58701"/>
<dbReference type="Proteomes" id="UP000000805">
    <property type="component" value="Chromosome"/>
</dbReference>
<dbReference type="GO" id="GO:0005524">
    <property type="term" value="F:ATP binding"/>
    <property type="evidence" value="ECO:0007669"/>
    <property type="project" value="UniProtKB-KW"/>
</dbReference>
<dbReference type="GO" id="GO:0046872">
    <property type="term" value="F:metal ion binding"/>
    <property type="evidence" value="ECO:0007669"/>
    <property type="project" value="UniProtKB-KW"/>
</dbReference>
<dbReference type="GO" id="GO:0016779">
    <property type="term" value="F:nucleotidyltransferase activity"/>
    <property type="evidence" value="ECO:0007669"/>
    <property type="project" value="UniProtKB-KW"/>
</dbReference>
<dbReference type="CDD" id="cd05403">
    <property type="entry name" value="NT_KNTase_like"/>
    <property type="match status" value="1"/>
</dbReference>
<dbReference type="Gene3D" id="3.30.460.10">
    <property type="entry name" value="Beta Polymerase, domain 2"/>
    <property type="match status" value="1"/>
</dbReference>
<dbReference type="InterPro" id="IPR043519">
    <property type="entry name" value="NT_sf"/>
</dbReference>
<dbReference type="InterPro" id="IPR002934">
    <property type="entry name" value="Polymerase_NTP_transf_dom"/>
</dbReference>
<dbReference type="InterPro" id="IPR052548">
    <property type="entry name" value="Type_VII_TA_antitoxin"/>
</dbReference>
<dbReference type="PANTHER" id="PTHR33933">
    <property type="entry name" value="NUCLEOTIDYLTRANSFERASE"/>
    <property type="match status" value="1"/>
</dbReference>
<dbReference type="PANTHER" id="PTHR33933:SF1">
    <property type="entry name" value="PROTEIN ADENYLYLTRANSFERASE MNTA-RELATED"/>
    <property type="match status" value="1"/>
</dbReference>
<dbReference type="Pfam" id="PF01909">
    <property type="entry name" value="NTP_transf_2"/>
    <property type="match status" value="1"/>
</dbReference>
<dbReference type="SUPFAM" id="SSF81301">
    <property type="entry name" value="Nucleotidyltransferase"/>
    <property type="match status" value="1"/>
</dbReference>